<protein>
    <recommendedName>
        <fullName>Probable endonuclease lcl3</fullName>
        <ecNumber>3.1.-.-</ecNumber>
    </recommendedName>
</protein>
<name>LCL3_SCHJY</name>
<reference key="1">
    <citation type="journal article" date="2011" name="Science">
        <title>Comparative functional genomics of the fission yeasts.</title>
        <authorList>
            <person name="Rhind N."/>
            <person name="Chen Z."/>
            <person name="Yassour M."/>
            <person name="Thompson D.A."/>
            <person name="Haas B.J."/>
            <person name="Habib N."/>
            <person name="Wapinski I."/>
            <person name="Roy S."/>
            <person name="Lin M.F."/>
            <person name="Heiman D.I."/>
            <person name="Young S.K."/>
            <person name="Furuya K."/>
            <person name="Guo Y."/>
            <person name="Pidoux A."/>
            <person name="Chen H.M."/>
            <person name="Robbertse B."/>
            <person name="Goldberg J.M."/>
            <person name="Aoki K."/>
            <person name="Bayne E.H."/>
            <person name="Berlin A.M."/>
            <person name="Desjardins C.A."/>
            <person name="Dobbs E."/>
            <person name="Dukaj L."/>
            <person name="Fan L."/>
            <person name="FitzGerald M.G."/>
            <person name="French C."/>
            <person name="Gujja S."/>
            <person name="Hansen K."/>
            <person name="Keifenheim D."/>
            <person name="Levin J.Z."/>
            <person name="Mosher R.A."/>
            <person name="Mueller C.A."/>
            <person name="Pfiffner J."/>
            <person name="Priest M."/>
            <person name="Russ C."/>
            <person name="Smialowska A."/>
            <person name="Swoboda P."/>
            <person name="Sykes S.M."/>
            <person name="Vaughn M."/>
            <person name="Vengrova S."/>
            <person name="Yoder R."/>
            <person name="Zeng Q."/>
            <person name="Allshire R."/>
            <person name="Baulcombe D."/>
            <person name="Birren B.W."/>
            <person name="Brown W."/>
            <person name="Ekwall K."/>
            <person name="Kellis M."/>
            <person name="Leatherwood J."/>
            <person name="Levin H."/>
            <person name="Margalit H."/>
            <person name="Martienssen R."/>
            <person name="Nieduszynski C.A."/>
            <person name="Spatafora J.W."/>
            <person name="Friedman N."/>
            <person name="Dalgaard J.Z."/>
            <person name="Baumann P."/>
            <person name="Niki H."/>
            <person name="Regev A."/>
            <person name="Nusbaum C."/>
        </authorList>
    </citation>
    <scope>NUCLEOTIDE SEQUENCE [LARGE SCALE GENOMIC DNA]</scope>
    <source>
        <strain>yFS275 / FY16936</strain>
    </source>
</reference>
<sequence>MQNQRNEYSISLRNLSYIILTISTGIVIHRKFRRIKDIEDLSSRFFRGQQKSLTKLNSLYGYVTSVGDGDNFRFYHTPGGRLLGWHWLRKVPSNRNALKNETLSIRLSGIDAPESGYFGKLGQPFSLEAKQFLARKLEHRSVRVYPLHRDQYNRAVCGVTYYPIRWLFFKRDIGPQLVSRGLAVVYEGANSSYYPTEKSVLMKIQETARKRKLGMHSLGNKLELPKDYKKRNK</sequence>
<comment type="subcellular location">
    <subcellularLocation>
        <location>Mitochondrion</location>
    </subcellularLocation>
    <subcellularLocation>
        <location evidence="1">Membrane</location>
        <topology evidence="1">Single-pass membrane protein</topology>
    </subcellularLocation>
</comment>
<comment type="similarity">
    <text evidence="4">Belongs to the LCL3 family.</text>
</comment>
<organism>
    <name type="scientific">Schizosaccharomyces japonicus (strain yFS275 / FY16936)</name>
    <name type="common">Fission yeast</name>
    <dbReference type="NCBI Taxonomy" id="402676"/>
    <lineage>
        <taxon>Eukaryota</taxon>
        <taxon>Fungi</taxon>
        <taxon>Dikarya</taxon>
        <taxon>Ascomycota</taxon>
        <taxon>Taphrinomycotina</taxon>
        <taxon>Schizosaccharomycetes</taxon>
        <taxon>Schizosaccharomycetales</taxon>
        <taxon>Schizosaccharomycetaceae</taxon>
        <taxon>Schizosaccharomyces</taxon>
    </lineage>
</organism>
<feature type="chain" id="PRO_0000408682" description="Probable endonuclease lcl3">
    <location>
        <begin position="1"/>
        <end position="233"/>
    </location>
</feature>
<feature type="transmembrane region" description="Helical" evidence="2">
    <location>
        <begin position="10"/>
        <end position="29"/>
    </location>
</feature>
<feature type="domain" description="TNase-like" evidence="3">
    <location>
        <begin position="57"/>
        <end position="218"/>
    </location>
</feature>
<feature type="active site" evidence="3">
    <location>
        <position position="106"/>
    </location>
</feature>
<feature type="active site" evidence="3">
    <location>
        <position position="114"/>
    </location>
</feature>
<feature type="active site" evidence="3">
    <location>
        <position position="154"/>
    </location>
</feature>
<feature type="binding site" evidence="3">
    <location>
        <position position="111"/>
    </location>
    <ligand>
        <name>Ca(2+)</name>
        <dbReference type="ChEBI" id="CHEBI:29108"/>
    </ligand>
</feature>
<dbReference type="EC" id="3.1.-.-"/>
<dbReference type="EMBL" id="KE651168">
    <property type="protein sequence ID" value="EEB06699.1"/>
    <property type="molecule type" value="Genomic_DNA"/>
</dbReference>
<dbReference type="RefSeq" id="XP_002172992.1">
    <property type="nucleotide sequence ID" value="XM_002172956.2"/>
</dbReference>
<dbReference type="SMR" id="B6JYT1"/>
<dbReference type="STRING" id="402676.B6JYT1"/>
<dbReference type="EnsemblFungi" id="EEB06699">
    <property type="protein sequence ID" value="EEB06699"/>
    <property type="gene ID" value="SJAG_01749"/>
</dbReference>
<dbReference type="GeneID" id="7048181"/>
<dbReference type="JaponicusDB" id="SJAG_01749">
    <property type="gene designation" value="lcl3"/>
</dbReference>
<dbReference type="VEuPathDB" id="FungiDB:SJAG_01749"/>
<dbReference type="eggNOG" id="ENOG502S1U4">
    <property type="taxonomic scope" value="Eukaryota"/>
</dbReference>
<dbReference type="HOGENOM" id="CLU_046484_0_1_1"/>
<dbReference type="OMA" id="PWLANGD"/>
<dbReference type="OrthoDB" id="430293at2759"/>
<dbReference type="Proteomes" id="UP000001744">
    <property type="component" value="Unassembled WGS sequence"/>
</dbReference>
<dbReference type="GO" id="GO:0016020">
    <property type="term" value="C:membrane"/>
    <property type="evidence" value="ECO:0007669"/>
    <property type="project" value="UniProtKB-SubCell"/>
</dbReference>
<dbReference type="GO" id="GO:0005739">
    <property type="term" value="C:mitochondrion"/>
    <property type="evidence" value="ECO:0007669"/>
    <property type="project" value="UniProtKB-SubCell"/>
</dbReference>
<dbReference type="GO" id="GO:0004519">
    <property type="term" value="F:endonuclease activity"/>
    <property type="evidence" value="ECO:0007669"/>
    <property type="project" value="UniProtKB-KW"/>
</dbReference>
<dbReference type="GO" id="GO:0046872">
    <property type="term" value="F:metal ion binding"/>
    <property type="evidence" value="ECO:0007669"/>
    <property type="project" value="UniProtKB-KW"/>
</dbReference>
<dbReference type="Gene3D" id="2.40.50.90">
    <property type="match status" value="1"/>
</dbReference>
<dbReference type="InterPro" id="IPR035437">
    <property type="entry name" value="SNase_OB-fold_sf"/>
</dbReference>
<dbReference type="InterPro" id="IPR016071">
    <property type="entry name" value="Staphylococal_nuclease_OB-fold"/>
</dbReference>
<dbReference type="PANTHER" id="PTHR12302">
    <property type="entry name" value="EBNA2 BINDING PROTEIN P100"/>
    <property type="match status" value="1"/>
</dbReference>
<dbReference type="PANTHER" id="PTHR12302:SF3">
    <property type="entry name" value="SERINE_THREONINE-PROTEIN KINASE 31"/>
    <property type="match status" value="1"/>
</dbReference>
<dbReference type="Pfam" id="PF00565">
    <property type="entry name" value="SNase"/>
    <property type="match status" value="1"/>
</dbReference>
<dbReference type="SMART" id="SM00318">
    <property type="entry name" value="SNc"/>
    <property type="match status" value="1"/>
</dbReference>
<dbReference type="SUPFAM" id="SSF50199">
    <property type="entry name" value="Staphylococcal nuclease"/>
    <property type="match status" value="1"/>
</dbReference>
<dbReference type="PROSITE" id="PS50830">
    <property type="entry name" value="TNASE_3"/>
    <property type="match status" value="1"/>
</dbReference>
<accession>B6JYT1</accession>
<gene>
    <name type="primary">lcl3</name>
    <name type="ORF">SJAG_01749</name>
</gene>
<evidence type="ECO:0000250" key="1"/>
<evidence type="ECO:0000255" key="2"/>
<evidence type="ECO:0000255" key="3">
    <source>
        <dbReference type="PROSITE-ProRule" id="PRU00272"/>
    </source>
</evidence>
<evidence type="ECO:0000305" key="4"/>
<keyword id="KW-0106">Calcium</keyword>
<keyword id="KW-0255">Endonuclease</keyword>
<keyword id="KW-0378">Hydrolase</keyword>
<keyword id="KW-0472">Membrane</keyword>
<keyword id="KW-0479">Metal-binding</keyword>
<keyword id="KW-0496">Mitochondrion</keyword>
<keyword id="KW-0540">Nuclease</keyword>
<keyword id="KW-1185">Reference proteome</keyword>
<keyword id="KW-0812">Transmembrane</keyword>
<keyword id="KW-1133">Transmembrane helix</keyword>
<proteinExistence type="inferred from homology"/>